<protein>
    <recommendedName>
        <fullName evidence="1">Trigger factor</fullName>
        <shortName evidence="1">TF</shortName>
        <ecNumber evidence="1">5.2.1.8</ecNumber>
    </recommendedName>
    <alternativeName>
        <fullName evidence="1">PPIase</fullName>
    </alternativeName>
</protein>
<proteinExistence type="inferred from homology"/>
<name>TIG_LISMO</name>
<accession>Q8Y7L0</accession>
<dbReference type="EC" id="5.2.1.8" evidence="1"/>
<dbReference type="EMBL" id="AL591978">
    <property type="protein sequence ID" value="CAC99345.1"/>
    <property type="molecule type" value="Genomic_DNA"/>
</dbReference>
<dbReference type="PIR" id="AC1233">
    <property type="entry name" value="AC1233"/>
</dbReference>
<dbReference type="RefSeq" id="NP_464792.1">
    <property type="nucleotide sequence ID" value="NC_003210.1"/>
</dbReference>
<dbReference type="RefSeq" id="WP_003723884.1">
    <property type="nucleotide sequence ID" value="NZ_CP149495.1"/>
</dbReference>
<dbReference type="SMR" id="Q8Y7L0"/>
<dbReference type="STRING" id="169963.gene:17593924"/>
<dbReference type="PaxDb" id="169963-lmo1267"/>
<dbReference type="EnsemblBacteria" id="CAC99345">
    <property type="protein sequence ID" value="CAC99345"/>
    <property type="gene ID" value="CAC99345"/>
</dbReference>
<dbReference type="GeneID" id="985096"/>
<dbReference type="KEGG" id="lmo:lmo1267"/>
<dbReference type="PATRIC" id="fig|169963.11.peg.1302"/>
<dbReference type="eggNOG" id="COG0544">
    <property type="taxonomic scope" value="Bacteria"/>
</dbReference>
<dbReference type="HOGENOM" id="CLU_033058_3_2_9"/>
<dbReference type="OrthoDB" id="9767721at2"/>
<dbReference type="PhylomeDB" id="Q8Y7L0"/>
<dbReference type="BioCyc" id="LMON169963:LMO1267-MONOMER"/>
<dbReference type="Proteomes" id="UP000000817">
    <property type="component" value="Chromosome"/>
</dbReference>
<dbReference type="GO" id="GO:0005737">
    <property type="term" value="C:cytoplasm"/>
    <property type="evidence" value="ECO:0007669"/>
    <property type="project" value="UniProtKB-SubCell"/>
</dbReference>
<dbReference type="GO" id="GO:0003755">
    <property type="term" value="F:peptidyl-prolyl cis-trans isomerase activity"/>
    <property type="evidence" value="ECO:0000318"/>
    <property type="project" value="GO_Central"/>
</dbReference>
<dbReference type="GO" id="GO:0044183">
    <property type="term" value="F:protein folding chaperone"/>
    <property type="evidence" value="ECO:0000318"/>
    <property type="project" value="GO_Central"/>
</dbReference>
<dbReference type="GO" id="GO:0043022">
    <property type="term" value="F:ribosome binding"/>
    <property type="evidence" value="ECO:0000318"/>
    <property type="project" value="GO_Central"/>
</dbReference>
<dbReference type="GO" id="GO:0051083">
    <property type="term" value="P:'de novo' cotranslational protein folding"/>
    <property type="evidence" value="ECO:0000318"/>
    <property type="project" value="GO_Central"/>
</dbReference>
<dbReference type="GO" id="GO:0051301">
    <property type="term" value="P:cell division"/>
    <property type="evidence" value="ECO:0007669"/>
    <property type="project" value="UniProtKB-KW"/>
</dbReference>
<dbReference type="GO" id="GO:0061077">
    <property type="term" value="P:chaperone-mediated protein folding"/>
    <property type="evidence" value="ECO:0000318"/>
    <property type="project" value="GO_Central"/>
</dbReference>
<dbReference type="GO" id="GO:0015031">
    <property type="term" value="P:protein transport"/>
    <property type="evidence" value="ECO:0007669"/>
    <property type="project" value="UniProtKB-UniRule"/>
</dbReference>
<dbReference type="GO" id="GO:0043335">
    <property type="term" value="P:protein unfolding"/>
    <property type="evidence" value="ECO:0000318"/>
    <property type="project" value="GO_Central"/>
</dbReference>
<dbReference type="FunFam" id="3.10.50.40:FF:000001">
    <property type="entry name" value="Trigger factor"/>
    <property type="match status" value="1"/>
</dbReference>
<dbReference type="FunFam" id="3.30.70.1050:FF:000002">
    <property type="entry name" value="Trigger factor"/>
    <property type="match status" value="1"/>
</dbReference>
<dbReference type="Gene3D" id="3.10.50.40">
    <property type="match status" value="1"/>
</dbReference>
<dbReference type="Gene3D" id="3.30.70.1050">
    <property type="entry name" value="Trigger factor ribosome-binding domain"/>
    <property type="match status" value="1"/>
</dbReference>
<dbReference type="Gene3D" id="1.10.3120.10">
    <property type="entry name" value="Trigger factor, C-terminal domain"/>
    <property type="match status" value="1"/>
</dbReference>
<dbReference type="HAMAP" id="MF_00303">
    <property type="entry name" value="Trigger_factor_Tig"/>
    <property type="match status" value="1"/>
</dbReference>
<dbReference type="InterPro" id="IPR046357">
    <property type="entry name" value="PPIase_dom_sf"/>
</dbReference>
<dbReference type="InterPro" id="IPR001179">
    <property type="entry name" value="PPIase_FKBP_dom"/>
</dbReference>
<dbReference type="InterPro" id="IPR005215">
    <property type="entry name" value="Trig_fac"/>
</dbReference>
<dbReference type="InterPro" id="IPR008880">
    <property type="entry name" value="Trigger_fac_C"/>
</dbReference>
<dbReference type="InterPro" id="IPR037041">
    <property type="entry name" value="Trigger_fac_C_sf"/>
</dbReference>
<dbReference type="InterPro" id="IPR008881">
    <property type="entry name" value="Trigger_fac_ribosome-bd_bac"/>
</dbReference>
<dbReference type="InterPro" id="IPR036611">
    <property type="entry name" value="Trigger_fac_ribosome-bd_sf"/>
</dbReference>
<dbReference type="InterPro" id="IPR027304">
    <property type="entry name" value="Trigger_fact/SurA_dom_sf"/>
</dbReference>
<dbReference type="NCBIfam" id="TIGR00115">
    <property type="entry name" value="tig"/>
    <property type="match status" value="1"/>
</dbReference>
<dbReference type="PANTHER" id="PTHR30560">
    <property type="entry name" value="TRIGGER FACTOR CHAPERONE AND PEPTIDYL-PROLYL CIS/TRANS ISOMERASE"/>
    <property type="match status" value="1"/>
</dbReference>
<dbReference type="PANTHER" id="PTHR30560:SF3">
    <property type="entry name" value="TRIGGER FACTOR-LIKE PROTEIN TIG, CHLOROPLASTIC"/>
    <property type="match status" value="1"/>
</dbReference>
<dbReference type="Pfam" id="PF00254">
    <property type="entry name" value="FKBP_C"/>
    <property type="match status" value="1"/>
</dbReference>
<dbReference type="Pfam" id="PF05698">
    <property type="entry name" value="Trigger_C"/>
    <property type="match status" value="1"/>
</dbReference>
<dbReference type="Pfam" id="PF05697">
    <property type="entry name" value="Trigger_N"/>
    <property type="match status" value="1"/>
</dbReference>
<dbReference type="PIRSF" id="PIRSF003095">
    <property type="entry name" value="Trigger_factor"/>
    <property type="match status" value="1"/>
</dbReference>
<dbReference type="SUPFAM" id="SSF54534">
    <property type="entry name" value="FKBP-like"/>
    <property type="match status" value="1"/>
</dbReference>
<dbReference type="SUPFAM" id="SSF109998">
    <property type="entry name" value="Triger factor/SurA peptide-binding domain-like"/>
    <property type="match status" value="1"/>
</dbReference>
<dbReference type="SUPFAM" id="SSF102735">
    <property type="entry name" value="Trigger factor ribosome-binding domain"/>
    <property type="match status" value="1"/>
</dbReference>
<dbReference type="PROSITE" id="PS50059">
    <property type="entry name" value="FKBP_PPIASE"/>
    <property type="match status" value="1"/>
</dbReference>
<organism>
    <name type="scientific">Listeria monocytogenes serovar 1/2a (strain ATCC BAA-679 / EGD-e)</name>
    <dbReference type="NCBI Taxonomy" id="169963"/>
    <lineage>
        <taxon>Bacteria</taxon>
        <taxon>Bacillati</taxon>
        <taxon>Bacillota</taxon>
        <taxon>Bacilli</taxon>
        <taxon>Bacillales</taxon>
        <taxon>Listeriaceae</taxon>
        <taxon>Listeria</taxon>
    </lineage>
</organism>
<sequence>MSVKWEKQEGNVGKLTFEIEQEKVKEGLDRAFVKVRKTLNVPGFRKGKVPRQIFNQRFGEEALFQDALDILLPEVYSAAIDEAGIDPVDTPQVNIESMEKGETWVLTAEVTVKPEVKLGDYKGLEVEKRETELTTEELEAELKQLQERQAELVVKEDAPAENGDTVILDFEGFKDGVAFEGGQAENHSLELGSGQFIPGFEEKLVGLKAGDEADIELTFPEEYHAEDLAGQPVVFKVKLHEIKTKEVPALDDELAKDIDEEVETLDELKEKISKRLQEAKEESVAQAKQEEVIAKAVENAEVDIPHAMVHHEADHLMNHFAQDLQAQGLTPELYYQFTGQTEEAMHAQMEKDAEKRVKMNLVLEAIAEAENIEPTEEAIDEEISTLAEKYGMEKDAVRAALGDMSELKSDLKIRKAIDVLLDSAVEK</sequence>
<keyword id="KW-0131">Cell cycle</keyword>
<keyword id="KW-0132">Cell division</keyword>
<keyword id="KW-0143">Chaperone</keyword>
<keyword id="KW-0963">Cytoplasm</keyword>
<keyword id="KW-0413">Isomerase</keyword>
<keyword id="KW-1185">Reference proteome</keyword>
<keyword id="KW-0697">Rotamase</keyword>
<comment type="function">
    <text evidence="1">Involved in protein export. Acts as a chaperone by maintaining the newly synthesized protein in an open conformation. Functions as a peptidyl-prolyl cis-trans isomerase.</text>
</comment>
<comment type="catalytic activity">
    <reaction evidence="1">
        <text>[protein]-peptidylproline (omega=180) = [protein]-peptidylproline (omega=0)</text>
        <dbReference type="Rhea" id="RHEA:16237"/>
        <dbReference type="Rhea" id="RHEA-COMP:10747"/>
        <dbReference type="Rhea" id="RHEA-COMP:10748"/>
        <dbReference type="ChEBI" id="CHEBI:83833"/>
        <dbReference type="ChEBI" id="CHEBI:83834"/>
        <dbReference type="EC" id="5.2.1.8"/>
    </reaction>
</comment>
<comment type="subcellular location">
    <subcellularLocation>
        <location>Cytoplasm</location>
    </subcellularLocation>
    <text evidence="1">About half TF is bound to the ribosome near the polypeptide exit tunnel while the other half is free in the cytoplasm.</text>
</comment>
<comment type="domain">
    <text evidence="1">Consists of 3 domains; the N-terminus binds the ribosome, the middle domain has PPIase activity, while the C-terminus has intrinsic chaperone activity on its own.</text>
</comment>
<comment type="similarity">
    <text evidence="1">Belongs to the FKBP-type PPIase family. Tig subfamily.</text>
</comment>
<feature type="chain" id="PRO_0000179377" description="Trigger factor">
    <location>
        <begin position="1"/>
        <end position="427"/>
    </location>
</feature>
<feature type="domain" description="PPIase FKBP-type" evidence="1">
    <location>
        <begin position="163"/>
        <end position="248"/>
    </location>
</feature>
<gene>
    <name evidence="1" type="primary">tig</name>
    <name type="ordered locus">lmo1267</name>
</gene>
<reference key="1">
    <citation type="journal article" date="2001" name="Science">
        <title>Comparative genomics of Listeria species.</title>
        <authorList>
            <person name="Glaser P."/>
            <person name="Frangeul L."/>
            <person name="Buchrieser C."/>
            <person name="Rusniok C."/>
            <person name="Amend A."/>
            <person name="Baquero F."/>
            <person name="Berche P."/>
            <person name="Bloecker H."/>
            <person name="Brandt P."/>
            <person name="Chakraborty T."/>
            <person name="Charbit A."/>
            <person name="Chetouani F."/>
            <person name="Couve E."/>
            <person name="de Daruvar A."/>
            <person name="Dehoux P."/>
            <person name="Domann E."/>
            <person name="Dominguez-Bernal G."/>
            <person name="Duchaud E."/>
            <person name="Durant L."/>
            <person name="Dussurget O."/>
            <person name="Entian K.-D."/>
            <person name="Fsihi H."/>
            <person name="Garcia-del Portillo F."/>
            <person name="Garrido P."/>
            <person name="Gautier L."/>
            <person name="Goebel W."/>
            <person name="Gomez-Lopez N."/>
            <person name="Hain T."/>
            <person name="Hauf J."/>
            <person name="Jackson D."/>
            <person name="Jones L.-M."/>
            <person name="Kaerst U."/>
            <person name="Kreft J."/>
            <person name="Kuhn M."/>
            <person name="Kunst F."/>
            <person name="Kurapkat G."/>
            <person name="Madueno E."/>
            <person name="Maitournam A."/>
            <person name="Mata Vicente J."/>
            <person name="Ng E."/>
            <person name="Nedjari H."/>
            <person name="Nordsiek G."/>
            <person name="Novella S."/>
            <person name="de Pablos B."/>
            <person name="Perez-Diaz J.-C."/>
            <person name="Purcell R."/>
            <person name="Remmel B."/>
            <person name="Rose M."/>
            <person name="Schlueter T."/>
            <person name="Simoes N."/>
            <person name="Tierrez A."/>
            <person name="Vazquez-Boland J.-A."/>
            <person name="Voss H."/>
            <person name="Wehland J."/>
            <person name="Cossart P."/>
        </authorList>
    </citation>
    <scope>NUCLEOTIDE SEQUENCE [LARGE SCALE GENOMIC DNA]</scope>
    <source>
        <strain>ATCC BAA-679 / EGD-e</strain>
    </source>
</reference>
<evidence type="ECO:0000255" key="1">
    <source>
        <dbReference type="HAMAP-Rule" id="MF_00303"/>
    </source>
</evidence>